<keyword id="KW-1185">Reference proteome</keyword>
<keyword id="KW-0677">Repeat</keyword>
<evidence type="ECO:0000255" key="1">
    <source>
        <dbReference type="PROSITE-ProRule" id="PRU00159"/>
    </source>
</evidence>
<evidence type="ECO:0000305" key="2"/>
<protein>
    <recommendedName>
        <fullName>Pentatricopeptide repeat-containing protein At5g21222</fullName>
    </recommendedName>
    <alternativeName>
        <fullName>SNF1-like protein kinase AtC401</fullName>
    </alternativeName>
</protein>
<comment type="domain">
    <text>The protein kinase domain is predicted to be catalytically inactive.</text>
</comment>
<comment type="similarity">
    <text evidence="2">In the N-terminal section; belongs to the protein kinase superfamily. Ser/Thr protein kinase family.</text>
</comment>
<comment type="similarity">
    <text evidence="2">In the C-terminal section; belongs to the PPR family. P subfamily.</text>
</comment>
<comment type="sequence caution" evidence="2">
    <conflict type="erroneous gene model prediction">
        <sequence resource="EMBL-CDS" id="AAO73889"/>
    </conflict>
</comment>
<comment type="online information" name="Pentatricopeptide repeat proteins">
    <link uri="https://ppr.plantenergy.uwa.edu.au"/>
</comment>
<feature type="chain" id="PRO_0000363532" description="Pentatricopeptide repeat-containing protein At5g21222">
    <location>
        <begin position="1"/>
        <end position="831"/>
    </location>
</feature>
<feature type="domain" description="Protein kinase" evidence="1">
    <location>
        <begin position="13"/>
        <end position="268"/>
    </location>
</feature>
<feature type="repeat" description="PPR 1">
    <location>
        <begin position="318"/>
        <end position="352"/>
    </location>
</feature>
<feature type="repeat" description="PPR 2">
    <location>
        <begin position="353"/>
        <end position="387"/>
    </location>
</feature>
<feature type="repeat" description="PPR 3">
    <location>
        <begin position="388"/>
        <end position="422"/>
    </location>
</feature>
<feature type="repeat" description="PPR 4">
    <location>
        <begin position="423"/>
        <end position="457"/>
    </location>
</feature>
<feature type="repeat" description="PPR 5">
    <location>
        <begin position="459"/>
        <end position="493"/>
    </location>
</feature>
<feature type="repeat" description="PPR 6">
    <location>
        <begin position="494"/>
        <end position="529"/>
    </location>
</feature>
<feature type="repeat" description="PPR 7">
    <location>
        <begin position="530"/>
        <end position="564"/>
    </location>
</feature>
<feature type="repeat" description="PPR 8">
    <location>
        <begin position="565"/>
        <end position="599"/>
    </location>
</feature>
<feature type="repeat" description="PPR 9">
    <location>
        <begin position="600"/>
        <end position="634"/>
    </location>
</feature>
<feature type="repeat" description="PPR 10">
    <location>
        <begin position="635"/>
        <end position="669"/>
    </location>
</feature>
<feature type="repeat" description="PPR 11">
    <location>
        <begin position="670"/>
        <end position="705"/>
    </location>
</feature>
<feature type="repeat" description="PPR 12">
    <location>
        <begin position="706"/>
        <end position="740"/>
    </location>
</feature>
<feature type="sequence conflict" description="In Ref. 1; BAB85657." evidence="2" ref="1">
    <original>E</original>
    <variation>K</variation>
    <location>
        <position position="656"/>
    </location>
</feature>
<organism>
    <name type="scientific">Arabidopsis thaliana</name>
    <name type="common">Mouse-ear cress</name>
    <dbReference type="NCBI Taxonomy" id="3702"/>
    <lineage>
        <taxon>Eukaryota</taxon>
        <taxon>Viridiplantae</taxon>
        <taxon>Streptophyta</taxon>
        <taxon>Embryophyta</taxon>
        <taxon>Tracheophyta</taxon>
        <taxon>Spermatophyta</taxon>
        <taxon>Magnoliopsida</taxon>
        <taxon>eudicotyledons</taxon>
        <taxon>Gunneridae</taxon>
        <taxon>Pentapetalae</taxon>
        <taxon>rosids</taxon>
        <taxon>malvids</taxon>
        <taxon>Brassicales</taxon>
        <taxon>Brassicaceae</taxon>
        <taxon>Camelineae</taxon>
        <taxon>Arabidopsis</taxon>
    </lineage>
</organism>
<reference key="1">
    <citation type="journal article" date="1998" name="Plant Physiol.">
        <title>Accumulation of a clock-regulated transcript during flower-inductive darkness in Pharbitis nil.</title>
        <authorList>
            <person name="Sage-Ono K."/>
            <person name="Ono M."/>
            <person name="Harada H."/>
            <person name="Kamada H."/>
        </authorList>
    </citation>
    <scope>NUCLEOTIDE SEQUENCE [MRNA]</scope>
    <source>
        <strain>cv. Columbia</strain>
        <tissue>Seedling</tissue>
    </source>
</reference>
<reference key="2">
    <citation type="journal article" date="2004" name="Gene">
        <title>Genomic structure of a novel Arabidopsis clock-controlled gene, AtC401, which encodes a pentatricopeptide repeat protein.</title>
        <authorList>
            <person name="Oguchi T."/>
            <person name="Sage-Ono K."/>
            <person name="Kamada H."/>
            <person name="Ono M."/>
        </authorList>
    </citation>
    <scope>NUCLEOTIDE SEQUENCE [GENOMIC DNA]</scope>
</reference>
<reference key="3">
    <citation type="journal article" date="2000" name="Nature">
        <title>Sequence and analysis of chromosome 5 of the plant Arabidopsis thaliana.</title>
        <authorList>
            <person name="Tabata S."/>
            <person name="Kaneko T."/>
            <person name="Nakamura Y."/>
            <person name="Kotani H."/>
            <person name="Kato T."/>
            <person name="Asamizu E."/>
            <person name="Miyajima N."/>
            <person name="Sasamoto S."/>
            <person name="Kimura T."/>
            <person name="Hosouchi T."/>
            <person name="Kawashima K."/>
            <person name="Kohara M."/>
            <person name="Matsumoto M."/>
            <person name="Matsuno A."/>
            <person name="Muraki A."/>
            <person name="Nakayama S."/>
            <person name="Nakazaki N."/>
            <person name="Naruo K."/>
            <person name="Okumura S."/>
            <person name="Shinpo S."/>
            <person name="Takeuchi C."/>
            <person name="Wada T."/>
            <person name="Watanabe A."/>
            <person name="Yamada M."/>
            <person name="Yasuda M."/>
            <person name="Sato S."/>
            <person name="de la Bastide M."/>
            <person name="Huang E."/>
            <person name="Spiegel L."/>
            <person name="Gnoj L."/>
            <person name="O'Shaughnessy A."/>
            <person name="Preston R."/>
            <person name="Habermann K."/>
            <person name="Murray J."/>
            <person name="Johnson D."/>
            <person name="Rohlfing T."/>
            <person name="Nelson J."/>
            <person name="Stoneking T."/>
            <person name="Pepin K."/>
            <person name="Spieth J."/>
            <person name="Sekhon M."/>
            <person name="Armstrong J."/>
            <person name="Becker M."/>
            <person name="Belter E."/>
            <person name="Cordum H."/>
            <person name="Cordes M."/>
            <person name="Courtney L."/>
            <person name="Courtney W."/>
            <person name="Dante M."/>
            <person name="Du H."/>
            <person name="Edwards J."/>
            <person name="Fryman J."/>
            <person name="Haakensen B."/>
            <person name="Lamar E."/>
            <person name="Latreille P."/>
            <person name="Leonard S."/>
            <person name="Meyer R."/>
            <person name="Mulvaney E."/>
            <person name="Ozersky P."/>
            <person name="Riley A."/>
            <person name="Strowmatt C."/>
            <person name="Wagner-McPherson C."/>
            <person name="Wollam A."/>
            <person name="Yoakum M."/>
            <person name="Bell M."/>
            <person name="Dedhia N."/>
            <person name="Parnell L."/>
            <person name="Shah R."/>
            <person name="Rodriguez M."/>
            <person name="Hoon See L."/>
            <person name="Vil D."/>
            <person name="Baker J."/>
            <person name="Kirchoff K."/>
            <person name="Toth K."/>
            <person name="King L."/>
            <person name="Bahret A."/>
            <person name="Miller B."/>
            <person name="Marra M.A."/>
            <person name="Martienssen R."/>
            <person name="McCombie W.R."/>
            <person name="Wilson R.K."/>
            <person name="Murphy G."/>
            <person name="Bancroft I."/>
            <person name="Volckaert G."/>
            <person name="Wambutt R."/>
            <person name="Duesterhoeft A."/>
            <person name="Stiekema W."/>
            <person name="Pohl T."/>
            <person name="Entian K.-D."/>
            <person name="Terryn N."/>
            <person name="Hartley N."/>
            <person name="Bent E."/>
            <person name="Johnson S."/>
            <person name="Langham S.-A."/>
            <person name="McCullagh B."/>
            <person name="Robben J."/>
            <person name="Grymonprez B."/>
            <person name="Zimmermann W."/>
            <person name="Ramsperger U."/>
            <person name="Wedler H."/>
            <person name="Balke K."/>
            <person name="Wedler E."/>
            <person name="Peters S."/>
            <person name="van Staveren M."/>
            <person name="Dirkse W."/>
            <person name="Mooijman P."/>
            <person name="Klein Lankhorst R."/>
            <person name="Weitzenegger T."/>
            <person name="Bothe G."/>
            <person name="Rose M."/>
            <person name="Hauf J."/>
            <person name="Berneiser S."/>
            <person name="Hempel S."/>
            <person name="Feldpausch M."/>
            <person name="Lamberth S."/>
            <person name="Villarroel R."/>
            <person name="Gielen J."/>
            <person name="Ardiles W."/>
            <person name="Bents O."/>
            <person name="Lemcke K."/>
            <person name="Kolesov G."/>
            <person name="Mayer K.F.X."/>
            <person name="Rudd S."/>
            <person name="Schoof H."/>
            <person name="Schueller C."/>
            <person name="Zaccaria P."/>
            <person name="Mewes H.-W."/>
            <person name="Bevan M."/>
            <person name="Fransz P.F."/>
        </authorList>
    </citation>
    <scope>NUCLEOTIDE SEQUENCE [LARGE SCALE GENOMIC DNA]</scope>
    <source>
        <strain>cv. Columbia</strain>
    </source>
</reference>
<reference key="4">
    <citation type="journal article" date="2017" name="Plant J.">
        <title>Araport11: a complete reannotation of the Arabidopsis thaliana reference genome.</title>
        <authorList>
            <person name="Cheng C.Y."/>
            <person name="Krishnakumar V."/>
            <person name="Chan A.P."/>
            <person name="Thibaud-Nissen F."/>
            <person name="Schobel S."/>
            <person name="Town C.D."/>
        </authorList>
    </citation>
    <scope>GENOME REANNOTATION</scope>
    <source>
        <strain>cv. Columbia</strain>
    </source>
</reference>
<reference key="5">
    <citation type="journal article" date="2004" name="Plant Cell">
        <title>Genome-wide analysis of Arabidopsis pentatricopeptide repeat proteins reveals their essential role in organelle biogenesis.</title>
        <authorList>
            <person name="Lurin C."/>
            <person name="Andres C."/>
            <person name="Aubourg S."/>
            <person name="Bellaoui M."/>
            <person name="Bitton F."/>
            <person name="Bruyere C."/>
            <person name="Caboche M."/>
            <person name="Debast C."/>
            <person name="Gualberto J."/>
            <person name="Hoffmann B."/>
            <person name="Lecharny A."/>
            <person name="Le Ret M."/>
            <person name="Martin-Magniette M.-L."/>
            <person name="Mireau H."/>
            <person name="Peeters N."/>
            <person name="Renou J.-P."/>
            <person name="Szurek B."/>
            <person name="Taconnat L."/>
            <person name="Small I."/>
        </authorList>
    </citation>
    <scope>GENE FAMILY</scope>
</reference>
<name>PP395_ARATH</name>
<gene>
    <name type="primary">ATC401</name>
    <name type="ordered locus">At5g21222</name>
    <name type="ORF">F13M11</name>
</gene>
<accession>Q8S9D1</accession>
<accession>Q84VQ2</accession>
<accession>Q8S9D2</accession>
<dbReference type="EMBL" id="AB050965">
    <property type="protein sequence ID" value="BAB85657.1"/>
    <property type="molecule type" value="mRNA"/>
</dbReference>
<dbReference type="EMBL" id="AB052663">
    <property type="protein sequence ID" value="BAB85674.1"/>
    <property type="molecule type" value="Genomic_DNA"/>
</dbReference>
<dbReference type="EMBL" id="AC140977">
    <property type="protein sequence ID" value="AAO73889.1"/>
    <property type="status" value="ALT_SEQ"/>
    <property type="molecule type" value="Genomic_DNA"/>
</dbReference>
<dbReference type="EMBL" id="CP002688">
    <property type="protein sequence ID" value="AED92946.1"/>
    <property type="molecule type" value="Genomic_DNA"/>
</dbReference>
<dbReference type="EMBL" id="CP002688">
    <property type="protein sequence ID" value="ANM68257.1"/>
    <property type="molecule type" value="Genomic_DNA"/>
</dbReference>
<dbReference type="EMBL" id="CP002688">
    <property type="protein sequence ID" value="ANM68258.1"/>
    <property type="molecule type" value="Genomic_DNA"/>
</dbReference>
<dbReference type="EMBL" id="CP002688">
    <property type="protein sequence ID" value="ANM68259.1"/>
    <property type="molecule type" value="Genomic_DNA"/>
</dbReference>
<dbReference type="RefSeq" id="NP_001330026.1">
    <property type="nucleotide sequence ID" value="NM_001343701.1"/>
</dbReference>
<dbReference type="RefSeq" id="NP_001330027.1">
    <property type="nucleotide sequence ID" value="NM_001343700.1"/>
</dbReference>
<dbReference type="RefSeq" id="NP_001330028.1">
    <property type="nucleotide sequence ID" value="NM_001343702.1"/>
</dbReference>
<dbReference type="RefSeq" id="NP_850859.2">
    <property type="nucleotide sequence ID" value="NM_180528.4"/>
</dbReference>
<dbReference type="SMR" id="Q8S9D1"/>
<dbReference type="FunCoup" id="Q8S9D1">
    <property type="interactions" value="687"/>
</dbReference>
<dbReference type="STRING" id="3702.Q8S9D1"/>
<dbReference type="PaxDb" id="3702-AT5G21222.1"/>
<dbReference type="ProteomicsDB" id="249276"/>
<dbReference type="EnsemblPlants" id="AT5G21222.1">
    <property type="protein sequence ID" value="AT5G21222.1"/>
    <property type="gene ID" value="AT5G21222"/>
</dbReference>
<dbReference type="EnsemblPlants" id="AT5G21222.2">
    <property type="protein sequence ID" value="AT5G21222.2"/>
    <property type="gene ID" value="AT5G21222"/>
</dbReference>
<dbReference type="EnsemblPlants" id="AT5G21222.3">
    <property type="protein sequence ID" value="AT5G21222.3"/>
    <property type="gene ID" value="AT5G21222"/>
</dbReference>
<dbReference type="EnsemblPlants" id="AT5G21222.4">
    <property type="protein sequence ID" value="AT5G21222.4"/>
    <property type="gene ID" value="AT5G21222"/>
</dbReference>
<dbReference type="GeneID" id="832244"/>
<dbReference type="Gramene" id="AT5G21222.1">
    <property type="protein sequence ID" value="AT5G21222.1"/>
    <property type="gene ID" value="AT5G21222"/>
</dbReference>
<dbReference type="Gramene" id="AT5G21222.2">
    <property type="protein sequence ID" value="AT5G21222.2"/>
    <property type="gene ID" value="AT5G21222"/>
</dbReference>
<dbReference type="Gramene" id="AT5G21222.3">
    <property type="protein sequence ID" value="AT5G21222.3"/>
    <property type="gene ID" value="AT5G21222"/>
</dbReference>
<dbReference type="Gramene" id="AT5G21222.4">
    <property type="protein sequence ID" value="AT5G21222.4"/>
    <property type="gene ID" value="AT5G21222"/>
</dbReference>
<dbReference type="KEGG" id="ath:AT5G21222"/>
<dbReference type="Araport" id="AT5G21222"/>
<dbReference type="TAIR" id="AT5G21222"/>
<dbReference type="eggNOG" id="KOG0583">
    <property type="taxonomic scope" value="Eukaryota"/>
</dbReference>
<dbReference type="eggNOG" id="KOG4197">
    <property type="taxonomic scope" value="Eukaryota"/>
</dbReference>
<dbReference type="HOGENOM" id="CLU_017336_0_0_1"/>
<dbReference type="InParanoid" id="Q8S9D1"/>
<dbReference type="OMA" id="CIKSQFG"/>
<dbReference type="PhylomeDB" id="Q8S9D1"/>
<dbReference type="PRO" id="PR:Q8S9D1"/>
<dbReference type="Proteomes" id="UP000006548">
    <property type="component" value="Chromosome 5"/>
</dbReference>
<dbReference type="ExpressionAtlas" id="Q8S9D1">
    <property type="expression patterns" value="baseline and differential"/>
</dbReference>
<dbReference type="GO" id="GO:0009536">
    <property type="term" value="C:plastid"/>
    <property type="evidence" value="ECO:0007005"/>
    <property type="project" value="TAIR"/>
</dbReference>
<dbReference type="GO" id="GO:0005524">
    <property type="term" value="F:ATP binding"/>
    <property type="evidence" value="ECO:0007669"/>
    <property type="project" value="InterPro"/>
</dbReference>
<dbReference type="GO" id="GO:0003729">
    <property type="term" value="F:mRNA binding"/>
    <property type="evidence" value="ECO:0000314"/>
    <property type="project" value="TAIR"/>
</dbReference>
<dbReference type="GO" id="GO:0004672">
    <property type="term" value="F:protein kinase activity"/>
    <property type="evidence" value="ECO:0007669"/>
    <property type="project" value="InterPro"/>
</dbReference>
<dbReference type="FunFam" id="1.10.510.10:FF:000279">
    <property type="entry name" value="Non-specific serine/threonine protein kinase"/>
    <property type="match status" value="1"/>
</dbReference>
<dbReference type="FunFam" id="3.30.200.20:FF:000096">
    <property type="entry name" value="Non-specific serine/threonine protein kinase"/>
    <property type="match status" value="1"/>
</dbReference>
<dbReference type="Gene3D" id="1.25.40.10">
    <property type="entry name" value="Tetratricopeptide repeat domain"/>
    <property type="match status" value="4"/>
</dbReference>
<dbReference type="Gene3D" id="1.10.510.10">
    <property type="entry name" value="Transferase(Phosphotransferase) domain 1"/>
    <property type="match status" value="1"/>
</dbReference>
<dbReference type="InterPro" id="IPR011009">
    <property type="entry name" value="Kinase-like_dom_sf"/>
</dbReference>
<dbReference type="InterPro" id="IPR002885">
    <property type="entry name" value="Pentatricopeptide_rpt"/>
</dbReference>
<dbReference type="InterPro" id="IPR000719">
    <property type="entry name" value="Prot_kinase_dom"/>
</dbReference>
<dbReference type="InterPro" id="IPR008271">
    <property type="entry name" value="Ser/Thr_kinase_AS"/>
</dbReference>
<dbReference type="InterPro" id="IPR011990">
    <property type="entry name" value="TPR-like_helical_dom_sf"/>
</dbReference>
<dbReference type="NCBIfam" id="TIGR00756">
    <property type="entry name" value="PPR"/>
    <property type="match status" value="10"/>
</dbReference>
<dbReference type="PANTHER" id="PTHR47931">
    <property type="entry name" value="OS01G0228400 PROTEIN"/>
    <property type="match status" value="1"/>
</dbReference>
<dbReference type="PANTHER" id="PTHR47931:SF2">
    <property type="entry name" value="OS01G0228400 PROTEIN"/>
    <property type="match status" value="1"/>
</dbReference>
<dbReference type="Pfam" id="PF00069">
    <property type="entry name" value="Pkinase"/>
    <property type="match status" value="1"/>
</dbReference>
<dbReference type="Pfam" id="PF13041">
    <property type="entry name" value="PPR_2"/>
    <property type="match status" value="5"/>
</dbReference>
<dbReference type="Pfam" id="PF13812">
    <property type="entry name" value="PPR_3"/>
    <property type="match status" value="1"/>
</dbReference>
<dbReference type="SMART" id="SM00220">
    <property type="entry name" value="S_TKc"/>
    <property type="match status" value="1"/>
</dbReference>
<dbReference type="SUPFAM" id="SSF56112">
    <property type="entry name" value="Protein kinase-like (PK-like)"/>
    <property type="match status" value="1"/>
</dbReference>
<dbReference type="PROSITE" id="PS51375">
    <property type="entry name" value="PPR"/>
    <property type="match status" value="12"/>
</dbReference>
<dbReference type="PROSITE" id="PS50011">
    <property type="entry name" value="PROTEIN_KINASE_DOM"/>
    <property type="match status" value="1"/>
</dbReference>
<dbReference type="PROSITE" id="PS00108">
    <property type="entry name" value="PROTEIN_KINASE_ST"/>
    <property type="match status" value="1"/>
</dbReference>
<proteinExistence type="evidence at transcript level"/>
<sequence>MSEPKVRRWVGKYEVGRLIGECNFGKLRSAVDTETGDPVALMILDKDKVLKHKMAEQIKREISIMKLINHPNVVQLYEVLASKAKIYIVLEFISGGKLFDKIKNDGRMNEDEAQRYFQQLINAVDYCHSRGVYHRDLKPENLLLDAQENLKVAEFGLIALSQQAGGDGLRHTACGNPDYAAPEVLNDQGYDGAKADLWSCGVILFVLLAGYLPFEDSSLTTLYKKISSADFSCPPWLSSGVKNLIVRILDPNPMTRITIPEILEDVWFKKDYKPAVFEEKKEANLADVEAVFKDSEEGRVQLRSFPCVICSGGTTCGDVRSRTKLMNGLIERGRPQEAHSIFNTLIEEGHKPSLITYTTLVTALTRQKHFHSLLSLISKVEKNGLKPDTILFNAIINASSESGNLDQAMKIFEKMKESGCKPTASTFNTLIKGYGKIGKLEESSRLLDMMLRDEMLQPNDRTCNILVQAWCNQRKIEEAWNIVYKMQSYGVKPDVVTFNTLAKAYARIGSTCTAEDMIIPRMLHNKVKPNVRTCGTIVNGYCEEGKMEEALRFFYRMKELGVHPNLFVFNSLIKGFLNINDMDGVGEVVDLMEEFGVKPDVVTFSTLMNAWSSVGDMKRCEEIYTDMLEGGIDPDIHAFSILAKGYARAGEPEKAEQILNQMRKFGVRPNVVIYTQIISGWCSAGEMKKAMQVYKKMCGIVGLSPNLTTYETLIWGFGEAKQPWKAEELLKDMEGKNVVPTRKTMQLIADGWKSIGVSNSNDANTLGSSFSTSSKLNIPNNIASSRSPLFLKGMPEKPKLCIKSQFGLRQTLLVVLCRDQIGEAGRFCKFM</sequence>